<protein>
    <recommendedName>
        <fullName evidence="1">DNA-directed RNA polymerase subunit Rpo1N</fullName>
        <ecNumber evidence="1">2.7.7.6</ecNumber>
    </recommendedName>
    <alternativeName>
        <fullName evidence="1">DNA-directed RNA polymerase subunit A'</fullName>
    </alternativeName>
    <component>
        <recommendedName>
            <fullName>Mja rpo1N intein</fullName>
        </recommendedName>
        <alternativeName>
            <fullName>Mja rpoA' intein</fullName>
        </alternativeName>
        <alternativeName>
            <fullName>Mja rpoA1 intein</fullName>
        </alternativeName>
    </component>
</protein>
<name>RPO1N_METJA</name>
<reference key="1">
    <citation type="journal article" date="1996" name="Science">
        <title>Complete genome sequence of the methanogenic archaeon, Methanococcus jannaschii.</title>
        <authorList>
            <person name="Bult C.J."/>
            <person name="White O."/>
            <person name="Olsen G.J."/>
            <person name="Zhou L."/>
            <person name="Fleischmann R.D."/>
            <person name="Sutton G.G."/>
            <person name="Blake J.A."/>
            <person name="FitzGerald L.M."/>
            <person name="Clayton R.A."/>
            <person name="Gocayne J.D."/>
            <person name="Kerlavage A.R."/>
            <person name="Dougherty B.A."/>
            <person name="Tomb J.-F."/>
            <person name="Adams M.D."/>
            <person name="Reich C.I."/>
            <person name="Overbeek R."/>
            <person name="Kirkness E.F."/>
            <person name="Weinstock K.G."/>
            <person name="Merrick J.M."/>
            <person name="Glodek A."/>
            <person name="Scott J.L."/>
            <person name="Geoghagen N.S.M."/>
            <person name="Weidman J.F."/>
            <person name="Fuhrmann J.L."/>
            <person name="Nguyen D."/>
            <person name="Utterback T.R."/>
            <person name="Kelley J.M."/>
            <person name="Peterson J.D."/>
            <person name="Sadow P.W."/>
            <person name="Hanna M.C."/>
            <person name="Cotton M.D."/>
            <person name="Roberts K.M."/>
            <person name="Hurst M.A."/>
            <person name="Kaine B.P."/>
            <person name="Borodovsky M."/>
            <person name="Klenk H.-P."/>
            <person name="Fraser C.M."/>
            <person name="Smith H.O."/>
            <person name="Woese C.R."/>
            <person name="Venter J.C."/>
        </authorList>
    </citation>
    <scope>NUCLEOTIDE SEQUENCE [LARGE SCALE GENOMIC DNA]</scope>
    <source>
        <strain>ATCC 43067 / DSM 2661 / JAL-1 / JCM 10045 / NBRC 100440</strain>
    </source>
</reference>
<organism>
    <name type="scientific">Methanocaldococcus jannaschii (strain ATCC 43067 / DSM 2661 / JAL-1 / JCM 10045 / NBRC 100440)</name>
    <name type="common">Methanococcus jannaschii</name>
    <dbReference type="NCBI Taxonomy" id="243232"/>
    <lineage>
        <taxon>Archaea</taxon>
        <taxon>Methanobacteriati</taxon>
        <taxon>Methanobacteriota</taxon>
        <taxon>Methanomada group</taxon>
        <taxon>Methanococci</taxon>
        <taxon>Methanococcales</taxon>
        <taxon>Methanocaldococcaceae</taxon>
        <taxon>Methanocaldococcus</taxon>
    </lineage>
</organism>
<dbReference type="EC" id="2.7.7.6" evidence="1"/>
<dbReference type="EMBL" id="L77117">
    <property type="protein sequence ID" value="AAB99046.1"/>
    <property type="molecule type" value="Genomic_DNA"/>
</dbReference>
<dbReference type="RefSeq" id="WP_010870555.1">
    <property type="nucleotide sequence ID" value="NC_000909.1"/>
</dbReference>
<dbReference type="SMR" id="Q58445"/>
<dbReference type="FunCoup" id="Q58445">
    <property type="interactions" value="172"/>
</dbReference>
<dbReference type="STRING" id="243232.MJ_1042"/>
<dbReference type="PaxDb" id="243232-MJ_1042"/>
<dbReference type="EnsemblBacteria" id="AAB99046">
    <property type="protein sequence ID" value="AAB99046"/>
    <property type="gene ID" value="MJ_1042"/>
</dbReference>
<dbReference type="GeneID" id="1451939"/>
<dbReference type="KEGG" id="mja:MJ_1042"/>
<dbReference type="eggNOG" id="arCOG03158">
    <property type="taxonomic scope" value="Archaea"/>
</dbReference>
<dbReference type="eggNOG" id="arCOG04257">
    <property type="taxonomic scope" value="Archaea"/>
</dbReference>
<dbReference type="HOGENOM" id="CLU_258181_0_0_2"/>
<dbReference type="InParanoid" id="Q58445"/>
<dbReference type="OrthoDB" id="371812at2157"/>
<dbReference type="Proteomes" id="UP000000805">
    <property type="component" value="Chromosome"/>
</dbReference>
<dbReference type="GO" id="GO:0005737">
    <property type="term" value="C:cytoplasm"/>
    <property type="evidence" value="ECO:0007669"/>
    <property type="project" value="UniProtKB-SubCell"/>
</dbReference>
<dbReference type="GO" id="GO:0000428">
    <property type="term" value="C:DNA-directed RNA polymerase complex"/>
    <property type="evidence" value="ECO:0007669"/>
    <property type="project" value="UniProtKB-KW"/>
</dbReference>
<dbReference type="GO" id="GO:0003677">
    <property type="term" value="F:DNA binding"/>
    <property type="evidence" value="ECO:0007669"/>
    <property type="project" value="UniProtKB-UniRule"/>
</dbReference>
<dbReference type="GO" id="GO:0003899">
    <property type="term" value="F:DNA-directed RNA polymerase activity"/>
    <property type="evidence" value="ECO:0007669"/>
    <property type="project" value="UniProtKB-UniRule"/>
</dbReference>
<dbReference type="GO" id="GO:0004519">
    <property type="term" value="F:endonuclease activity"/>
    <property type="evidence" value="ECO:0007669"/>
    <property type="project" value="InterPro"/>
</dbReference>
<dbReference type="GO" id="GO:0000287">
    <property type="term" value="F:magnesium ion binding"/>
    <property type="evidence" value="ECO:0007669"/>
    <property type="project" value="UniProtKB-UniRule"/>
</dbReference>
<dbReference type="GO" id="GO:0008270">
    <property type="term" value="F:zinc ion binding"/>
    <property type="evidence" value="ECO:0007669"/>
    <property type="project" value="UniProtKB-UniRule"/>
</dbReference>
<dbReference type="GO" id="GO:0006351">
    <property type="term" value="P:DNA-templated transcription"/>
    <property type="evidence" value="ECO:0007669"/>
    <property type="project" value="UniProtKB-UniRule"/>
</dbReference>
<dbReference type="GO" id="GO:0016539">
    <property type="term" value="P:intein-mediated protein splicing"/>
    <property type="evidence" value="ECO:0007669"/>
    <property type="project" value="InterPro"/>
</dbReference>
<dbReference type="CDD" id="cd00081">
    <property type="entry name" value="Hint"/>
    <property type="match status" value="2"/>
</dbReference>
<dbReference type="FunFam" id="4.10.860.120:FF:000003">
    <property type="entry name" value="DNA-directed RNA polymerase subunit"/>
    <property type="match status" value="1"/>
</dbReference>
<dbReference type="Gene3D" id="1.10.10.1950">
    <property type="match status" value="2"/>
</dbReference>
<dbReference type="Gene3D" id="1.10.132.30">
    <property type="match status" value="1"/>
</dbReference>
<dbReference type="Gene3D" id="2.40.40.20">
    <property type="match status" value="2"/>
</dbReference>
<dbReference type="Gene3D" id="2.60.40.2940">
    <property type="match status" value="1"/>
</dbReference>
<dbReference type="Gene3D" id="6.10.250.2940">
    <property type="match status" value="1"/>
</dbReference>
<dbReference type="Gene3D" id="6.20.50.80">
    <property type="match status" value="1"/>
</dbReference>
<dbReference type="Gene3D" id="2.170.16.10">
    <property type="entry name" value="Hedgehog/Intein (Hint) domain"/>
    <property type="match status" value="2"/>
</dbReference>
<dbReference type="Gene3D" id="3.10.28.10">
    <property type="entry name" value="Homing endonucleases"/>
    <property type="match status" value="1"/>
</dbReference>
<dbReference type="Gene3D" id="3.30.1490.180">
    <property type="entry name" value="RNA polymerase ii"/>
    <property type="match status" value="1"/>
</dbReference>
<dbReference type="Gene3D" id="4.10.860.120">
    <property type="entry name" value="RNA polymerase II, clamp domain"/>
    <property type="match status" value="2"/>
</dbReference>
<dbReference type="HAMAP" id="MF_00863">
    <property type="entry name" value="RNApol_arch_Rpo1N"/>
    <property type="match status" value="1"/>
</dbReference>
<dbReference type="InterPro" id="IPR045867">
    <property type="entry name" value="DNA-dir_RpoC_beta_prime"/>
</dbReference>
<dbReference type="InterPro" id="IPR003586">
    <property type="entry name" value="Hint_dom_C"/>
</dbReference>
<dbReference type="InterPro" id="IPR003587">
    <property type="entry name" value="Hint_dom_N"/>
</dbReference>
<dbReference type="InterPro" id="IPR036844">
    <property type="entry name" value="Hint_dom_sf"/>
</dbReference>
<dbReference type="InterPro" id="IPR027434">
    <property type="entry name" value="Homing_endonucl"/>
</dbReference>
<dbReference type="InterPro" id="IPR006142">
    <property type="entry name" value="INTEIN"/>
</dbReference>
<dbReference type="InterPro" id="IPR030934">
    <property type="entry name" value="Intein_C"/>
</dbReference>
<dbReference type="InterPro" id="IPR004042">
    <property type="entry name" value="Intein_endonuc_central"/>
</dbReference>
<dbReference type="InterPro" id="IPR006141">
    <property type="entry name" value="Intein_N"/>
</dbReference>
<dbReference type="InterPro" id="IPR000722">
    <property type="entry name" value="RNA_pol_asu"/>
</dbReference>
<dbReference type="InterPro" id="IPR006592">
    <property type="entry name" value="RNA_pol_N"/>
</dbReference>
<dbReference type="InterPro" id="IPR007080">
    <property type="entry name" value="RNA_pol_Rpb1_1"/>
</dbReference>
<dbReference type="InterPro" id="IPR007066">
    <property type="entry name" value="RNA_pol_Rpb1_3"/>
</dbReference>
<dbReference type="InterPro" id="IPR007083">
    <property type="entry name" value="RNA_pol_Rpb1_4"/>
</dbReference>
<dbReference type="InterPro" id="IPR007081">
    <property type="entry name" value="RNA_pol_Rpb1_5"/>
</dbReference>
<dbReference type="InterPro" id="IPR044893">
    <property type="entry name" value="RNA_pol_Rpb1_clamp_domain"/>
</dbReference>
<dbReference type="InterPro" id="IPR038120">
    <property type="entry name" value="Rpb1_funnel_sf"/>
</dbReference>
<dbReference type="InterPro" id="IPR012758">
    <property type="entry name" value="RPO1N"/>
</dbReference>
<dbReference type="NCBIfam" id="TIGR01443">
    <property type="entry name" value="intein_Cterm"/>
    <property type="match status" value="1"/>
</dbReference>
<dbReference type="NCBIfam" id="TIGR01445">
    <property type="entry name" value="intein_Nterm"/>
    <property type="match status" value="1"/>
</dbReference>
<dbReference type="PANTHER" id="PTHR19376">
    <property type="entry name" value="DNA-DIRECTED RNA POLYMERASE"/>
    <property type="match status" value="1"/>
</dbReference>
<dbReference type="PANTHER" id="PTHR19376:SF32">
    <property type="entry name" value="DNA-DIRECTED RNA POLYMERASE III SUBUNIT RPC1"/>
    <property type="match status" value="1"/>
</dbReference>
<dbReference type="Pfam" id="PF14890">
    <property type="entry name" value="Intein_splicing"/>
    <property type="match status" value="1"/>
</dbReference>
<dbReference type="Pfam" id="PF04997">
    <property type="entry name" value="RNA_pol_Rpb1_1"/>
    <property type="match status" value="1"/>
</dbReference>
<dbReference type="Pfam" id="PF00623">
    <property type="entry name" value="RNA_pol_Rpb1_2"/>
    <property type="match status" value="2"/>
</dbReference>
<dbReference type="Pfam" id="PF04983">
    <property type="entry name" value="RNA_pol_Rpb1_3"/>
    <property type="match status" value="1"/>
</dbReference>
<dbReference type="Pfam" id="PF05000">
    <property type="entry name" value="RNA_pol_Rpb1_4"/>
    <property type="match status" value="1"/>
</dbReference>
<dbReference type="Pfam" id="PF04998">
    <property type="entry name" value="RNA_pol_Rpb1_5"/>
    <property type="match status" value="1"/>
</dbReference>
<dbReference type="PRINTS" id="PR00379">
    <property type="entry name" value="INTEIN"/>
</dbReference>
<dbReference type="SMART" id="SM00305">
    <property type="entry name" value="HintC"/>
    <property type="match status" value="1"/>
</dbReference>
<dbReference type="SMART" id="SM00306">
    <property type="entry name" value="HintN"/>
    <property type="match status" value="1"/>
</dbReference>
<dbReference type="SMART" id="SM00663">
    <property type="entry name" value="RPOLA_N"/>
    <property type="match status" value="1"/>
</dbReference>
<dbReference type="SUPFAM" id="SSF64484">
    <property type="entry name" value="beta and beta-prime subunits of DNA dependent RNA-polymerase"/>
    <property type="match status" value="2"/>
</dbReference>
<dbReference type="SUPFAM" id="SSF51294">
    <property type="entry name" value="Hedgehog/intein (Hint) domain"/>
    <property type="match status" value="1"/>
</dbReference>
<dbReference type="SUPFAM" id="SSF55608">
    <property type="entry name" value="Homing endonucleases"/>
    <property type="match status" value="1"/>
</dbReference>
<dbReference type="PROSITE" id="PS50818">
    <property type="entry name" value="INTEIN_C_TER"/>
    <property type="match status" value="1"/>
</dbReference>
<dbReference type="PROSITE" id="PS50819">
    <property type="entry name" value="INTEIN_ENDONUCLEASE"/>
    <property type="match status" value="1"/>
</dbReference>
<dbReference type="PROSITE" id="PS50817">
    <property type="entry name" value="INTEIN_N_TER"/>
    <property type="match status" value="1"/>
</dbReference>
<gene>
    <name evidence="1" type="primary">rpo1N</name>
    <name evidence="1" type="synonym">rpoA1</name>
    <name type="ordered locus">MJ1042</name>
</gene>
<keyword id="KW-0068">Autocatalytic cleavage</keyword>
<keyword id="KW-0963">Cytoplasm</keyword>
<keyword id="KW-0238">DNA-binding</keyword>
<keyword id="KW-0240">DNA-directed RNA polymerase</keyword>
<keyword id="KW-0460">Magnesium</keyword>
<keyword id="KW-0479">Metal-binding</keyword>
<keyword id="KW-0548">Nucleotidyltransferase</keyword>
<keyword id="KW-0651">Protein splicing</keyword>
<keyword id="KW-1185">Reference proteome</keyword>
<keyword id="KW-0804">Transcription</keyword>
<keyword id="KW-0808">Transferase</keyword>
<keyword id="KW-0862">Zinc</keyword>
<comment type="function">
    <text evidence="1">DNA-dependent RNA polymerase (RNAP) catalyzes the transcription of DNA into RNA using the four ribonucleoside triphosphates as substrates. Forms the clamp head domain.</text>
</comment>
<comment type="catalytic activity">
    <reaction evidence="1">
        <text>RNA(n) + a ribonucleoside 5'-triphosphate = RNA(n+1) + diphosphate</text>
        <dbReference type="Rhea" id="RHEA:21248"/>
        <dbReference type="Rhea" id="RHEA-COMP:14527"/>
        <dbReference type="Rhea" id="RHEA-COMP:17342"/>
        <dbReference type="ChEBI" id="CHEBI:33019"/>
        <dbReference type="ChEBI" id="CHEBI:61557"/>
        <dbReference type="ChEBI" id="CHEBI:140395"/>
        <dbReference type="EC" id="2.7.7.6"/>
    </reaction>
</comment>
<comment type="cofactor">
    <cofactor evidence="1">
        <name>Mg(2+)</name>
        <dbReference type="ChEBI" id="CHEBI:18420"/>
    </cofactor>
</comment>
<comment type="cofactor">
    <cofactor evidence="1">
        <name>Zn(2+)</name>
        <dbReference type="ChEBI" id="CHEBI:29105"/>
    </cofactor>
    <text evidence="1">Binds at least 2 Zn(2+) per subunit.</text>
</comment>
<comment type="subunit">
    <text evidence="1">Part of the RNA polymerase complex.</text>
</comment>
<comment type="subcellular location">
    <subcellularLocation>
        <location evidence="1">Cytoplasm</location>
    </subcellularLocation>
</comment>
<comment type="PTM">
    <text evidence="2">This protein undergoes a protein self splicing that involves a post-translational excision of the intervening region (intein) followed by peptide ligation.</text>
</comment>
<comment type="similarity">
    <text evidence="1">Belongs to the RNA polymerase beta' chain family.</text>
</comment>
<proteinExistence type="inferred from homology"/>
<sequence>MERYEIPKEIGEIMFGLLSPDYIRQMSVAKIVTPDTYDEDGYPIDGGLMDTRLGVIDPGLVCKTCGGRIGECPGHFGHIELAKPVIHIGFAKTIYKILKAVCPHCGRVAISETKRKEILEKMEKLERDGGNKWEVCEEVYKEASKVTICPHCGEIKYDIKFEKPTTYYRIDGNEEKTLTPSDVREILEKIPDEDCILLGLNPEVARPEWMVLTVLPVPPVTVRPSITLETGERSEDDLTHKLVDIIRINNRLEENIEGGAPNLIIEDLWNLLQYHVNTYFDNEAPGIPPAKHRSGRPLKTLAQRLKGKEGRFRYNLAGKRVNFSSRTVISPDPCLSINEVGVPEVVAKELTVPEKVTKYNIERIRQLLRNGSEKHPGVNYVIRKMIGRDGTEQEYKVKITESNKDFWAENIREGDIVERHLMDGDIVLYNRQPSLHRMSIMAHRVRVLPYRTFRHNLCVCVDGDTTVLLDGKLIKIKDLEDKWKDVKVLTSDDLNPKLTSLSKYWKLNADEYGKKIYKIKTELGREIIATEDHPFYTTNGRKRCGELKVGDEVIIYPNDFPMFEDDNRVIVDEEKIKKVINNIGGTYKNKIINELKDRKLIPLTYNDQKASILARIVGHVMGDGSLIINNKNSRVVFRGDIEDLKTIKEDLKELGYDGEEIKLHEGETEITDYNGKKRIIKGKGYSFEVRKKSLCILLKALGCVGGDKTKKMYGIPNWIKTAPKYIKKEFLSAYFGSELTTPKIRNHGTSFKELSFKIAKIEEIFDEDRFIKDIKEMLKEFGIELKVRVEEGNLRKDGYKTKVYVASIYNHKEFFGRIGYTYANKKETLARYAYEYLLTKEKYLKDRNIKKLENNTKFITFDKFIKEKCLKNGFVKEKIVSIEETKVDYVYDITTISETHNFIANGFLTGNCPPYNADFDGDEMNLHVPQSEEARAEAEALMLVEKHILSPRFGGPIIGAIHDFISGAYLLTSNYFTKDEATLILRSGGIKDELWEPDKVENGVPLYSGKKIFSKALPKGLNLRYKAKICRKCDVCKKEECEYDAYVVIKDGELIKGVIDKNGYGAEAGLILHTIVKEFGPEAGRKFLDSATKMAIRAVMLRGFTTGIDDEDLPEEALKEIEKVLDEAEEKVKEIIEKYERGELELLPGLNLEESREAYISNVLREARDKAGAIAERYLGLDNHAVIMAVTGARGNILNLTQMAACLGQQSVRGKRIFRGYRGRVLPHFEKGDLGARSHGFVRSSYKKGLSPTEFFFHAMGGREGLVDQAVRTAQSGYMQRRLINALQDLKTEFDGTVRDSRGIMIQFKYGEDGIDPMLADRGKAVNIDRIIDKVKMKYNQ</sequence>
<evidence type="ECO:0000255" key="1">
    <source>
        <dbReference type="HAMAP-Rule" id="MF_00863"/>
    </source>
</evidence>
<evidence type="ECO:0000305" key="2"/>
<feature type="chain" id="PRO_0000453784" description="DNA-directed RNA polymerase subunit Rpo1N">
    <location>
        <begin position="1"/>
        <end position="1341"/>
    </location>
</feature>
<feature type="chain" id="PRO_0000031062" description="DNA-directed RNA polymerase subunit Rpo1N, 1st part">
    <location>
        <begin position="1"/>
        <end position="460"/>
    </location>
</feature>
<feature type="chain" id="PRO_0000031063" description="Mja rpo1N intein">
    <location>
        <begin position="461"/>
        <end position="911"/>
    </location>
</feature>
<feature type="chain" id="PRO_0000031064" description="DNA-directed RNA polymerase subunit Rpo1N, 2nd part">
    <location>
        <begin position="912"/>
        <end position="1341"/>
    </location>
</feature>
<feature type="binding site" evidence="1">
    <location>
        <position position="62"/>
    </location>
    <ligand>
        <name>Zn(2+)</name>
        <dbReference type="ChEBI" id="CHEBI:29105"/>
        <label>1</label>
    </ligand>
</feature>
<feature type="binding site" evidence="1">
    <location>
        <position position="65"/>
    </location>
    <ligand>
        <name>Zn(2+)</name>
        <dbReference type="ChEBI" id="CHEBI:29105"/>
        <label>1</label>
    </ligand>
</feature>
<feature type="binding site" evidence="1">
    <location>
        <position position="72"/>
    </location>
    <ligand>
        <name>Zn(2+)</name>
        <dbReference type="ChEBI" id="CHEBI:29105"/>
        <label>1</label>
    </ligand>
</feature>
<feature type="binding site" evidence="1">
    <location>
        <position position="75"/>
    </location>
    <ligand>
        <name>Zn(2+)</name>
        <dbReference type="ChEBI" id="CHEBI:29105"/>
        <label>1</label>
    </ligand>
</feature>
<feature type="binding site" evidence="1">
    <location>
        <position position="102"/>
    </location>
    <ligand>
        <name>Zn(2+)</name>
        <dbReference type="ChEBI" id="CHEBI:29105"/>
        <label>2</label>
    </ligand>
</feature>
<feature type="binding site" evidence="1">
    <location>
        <position position="105"/>
    </location>
    <ligand>
        <name>Zn(2+)</name>
        <dbReference type="ChEBI" id="CHEBI:29105"/>
        <label>2</label>
    </ligand>
</feature>
<feature type="binding site" evidence="1">
    <location>
        <position position="149"/>
    </location>
    <ligand>
        <name>Zn(2+)</name>
        <dbReference type="ChEBI" id="CHEBI:29105"/>
        <label>2</label>
    </ligand>
</feature>
<feature type="binding site" evidence="1">
    <location>
        <position position="152"/>
    </location>
    <ligand>
        <name>Zn(2+)</name>
        <dbReference type="ChEBI" id="CHEBI:29105"/>
        <label>2</label>
    </ligand>
</feature>
<feature type="binding site" evidence="1">
    <location>
        <position position="918"/>
    </location>
    <ligand>
        <name>Mg(2+)</name>
        <dbReference type="ChEBI" id="CHEBI:18420"/>
    </ligand>
</feature>
<feature type="binding site" evidence="1">
    <location>
        <position position="920"/>
    </location>
    <ligand>
        <name>Mg(2+)</name>
        <dbReference type="ChEBI" id="CHEBI:18420"/>
    </ligand>
</feature>
<feature type="binding site" evidence="1">
    <location>
        <position position="922"/>
    </location>
    <ligand>
        <name>Mg(2+)</name>
        <dbReference type="ChEBI" id="CHEBI:18420"/>
    </ligand>
</feature>
<accession>Q58445</accession>